<organism>
    <name type="scientific">Arabidopsis thaliana</name>
    <name type="common">Mouse-ear cress</name>
    <dbReference type="NCBI Taxonomy" id="3702"/>
    <lineage>
        <taxon>Eukaryota</taxon>
        <taxon>Viridiplantae</taxon>
        <taxon>Streptophyta</taxon>
        <taxon>Embryophyta</taxon>
        <taxon>Tracheophyta</taxon>
        <taxon>Spermatophyta</taxon>
        <taxon>Magnoliopsida</taxon>
        <taxon>eudicotyledons</taxon>
        <taxon>Gunneridae</taxon>
        <taxon>Pentapetalae</taxon>
        <taxon>rosids</taxon>
        <taxon>malvids</taxon>
        <taxon>Brassicales</taxon>
        <taxon>Brassicaceae</taxon>
        <taxon>Camelineae</taxon>
        <taxon>Arabidopsis</taxon>
    </lineage>
</organism>
<name>PPR68_ARATH</name>
<proteinExistence type="evidence at transcript level"/>
<sequence>MIKAPILQSLLASRDDLTHNPEVNNFGGKEQECLYLLKRCHNIDEFKQVHARFIKLSLFYSSSFSASSVLAKCAHSGWENSMNYAASIFRGIDDPCTFDFNTMIRGYVNVMSFEEALCFYNEMMQRGNEPDNFTYPCLLKACTRLKSIREGKQIHGQVFKLGLEADVFVQNSLINMYGRCGEMELSSAVFEKLESKTAASWSSMVSARAGMGMWSECLLLFRGMCSETNLKAEESGMVSALLACANTGALNLGMSIHGFLLRNISELNIIVQTSLVDMYVKCGCLDKALHIFQKMEKRNNLTYSAMISGLALHGEGESALRMFSKMIKEGLEPDHVVYVSVLNACSHSGLVKEGRRVFAEMLKEGKVEPTAEHYGCLVDLLGRAGLLEEALETIQSIPIEKNDVIWRTFLSQCRVRQNIELGQIAAQELLKLSSHNPGDYLLISNLYSQGQMWDDVARTRTEIAIKGLKQTPGFSIVELKGKTHRFVSQDRSHPKCKEIYKMLHQMEWQLKFEGYSPDLTQILLNVDEEEKKERLKGHSQKVAIAFGLLYTPPGSIIKIARNLRMCSDCHTYTKKISMIYEREIVVRDRNRFHLFKGGTCSCKDYW</sequence>
<reference key="1">
    <citation type="journal article" date="2000" name="Nature">
        <title>Sequence and analysis of chromosome 1 of the plant Arabidopsis thaliana.</title>
        <authorList>
            <person name="Theologis A."/>
            <person name="Ecker J.R."/>
            <person name="Palm C.J."/>
            <person name="Federspiel N.A."/>
            <person name="Kaul S."/>
            <person name="White O."/>
            <person name="Alonso J."/>
            <person name="Altafi H."/>
            <person name="Araujo R."/>
            <person name="Bowman C.L."/>
            <person name="Brooks S.Y."/>
            <person name="Buehler E."/>
            <person name="Chan A."/>
            <person name="Chao Q."/>
            <person name="Chen H."/>
            <person name="Cheuk R.F."/>
            <person name="Chin C.W."/>
            <person name="Chung M.K."/>
            <person name="Conn L."/>
            <person name="Conway A.B."/>
            <person name="Conway A.R."/>
            <person name="Creasy T.H."/>
            <person name="Dewar K."/>
            <person name="Dunn P."/>
            <person name="Etgu P."/>
            <person name="Feldblyum T.V."/>
            <person name="Feng J.-D."/>
            <person name="Fong B."/>
            <person name="Fujii C.Y."/>
            <person name="Gill J.E."/>
            <person name="Goldsmith A.D."/>
            <person name="Haas B."/>
            <person name="Hansen N.F."/>
            <person name="Hughes B."/>
            <person name="Huizar L."/>
            <person name="Hunter J.L."/>
            <person name="Jenkins J."/>
            <person name="Johnson-Hopson C."/>
            <person name="Khan S."/>
            <person name="Khaykin E."/>
            <person name="Kim C.J."/>
            <person name="Koo H.L."/>
            <person name="Kremenetskaia I."/>
            <person name="Kurtz D.B."/>
            <person name="Kwan A."/>
            <person name="Lam B."/>
            <person name="Langin-Hooper S."/>
            <person name="Lee A."/>
            <person name="Lee J.M."/>
            <person name="Lenz C.A."/>
            <person name="Li J.H."/>
            <person name="Li Y.-P."/>
            <person name="Lin X."/>
            <person name="Liu S.X."/>
            <person name="Liu Z.A."/>
            <person name="Luros J.S."/>
            <person name="Maiti R."/>
            <person name="Marziali A."/>
            <person name="Militscher J."/>
            <person name="Miranda M."/>
            <person name="Nguyen M."/>
            <person name="Nierman W.C."/>
            <person name="Osborne B.I."/>
            <person name="Pai G."/>
            <person name="Peterson J."/>
            <person name="Pham P.K."/>
            <person name="Rizzo M."/>
            <person name="Rooney T."/>
            <person name="Rowley D."/>
            <person name="Sakano H."/>
            <person name="Salzberg S.L."/>
            <person name="Schwartz J.R."/>
            <person name="Shinn P."/>
            <person name="Southwick A.M."/>
            <person name="Sun H."/>
            <person name="Tallon L.J."/>
            <person name="Tambunga G."/>
            <person name="Toriumi M.J."/>
            <person name="Town C.D."/>
            <person name="Utterback T."/>
            <person name="Van Aken S."/>
            <person name="Vaysberg M."/>
            <person name="Vysotskaia V.S."/>
            <person name="Walker M."/>
            <person name="Wu D."/>
            <person name="Yu G."/>
            <person name="Fraser C.M."/>
            <person name="Venter J.C."/>
            <person name="Davis R.W."/>
        </authorList>
    </citation>
    <scope>NUCLEOTIDE SEQUENCE [LARGE SCALE GENOMIC DNA]</scope>
    <source>
        <strain>cv. Columbia</strain>
    </source>
</reference>
<reference key="2">
    <citation type="journal article" date="2017" name="Plant J.">
        <title>Araport11: a complete reannotation of the Arabidopsis thaliana reference genome.</title>
        <authorList>
            <person name="Cheng C.Y."/>
            <person name="Krishnakumar V."/>
            <person name="Chan A.P."/>
            <person name="Thibaud-Nissen F."/>
            <person name="Schobel S."/>
            <person name="Town C.D."/>
        </authorList>
    </citation>
    <scope>GENOME REANNOTATION</scope>
    <source>
        <strain>cv. Columbia</strain>
    </source>
</reference>
<reference key="3">
    <citation type="submission" date="2006-07" db="EMBL/GenBank/DDBJ databases">
        <title>Large-scale analysis of RIKEN Arabidopsis full-length (RAFL) cDNAs.</title>
        <authorList>
            <person name="Totoki Y."/>
            <person name="Seki M."/>
            <person name="Ishida J."/>
            <person name="Nakajima M."/>
            <person name="Enju A."/>
            <person name="Kamiya A."/>
            <person name="Narusaka M."/>
            <person name="Shin-i T."/>
            <person name="Nakagawa M."/>
            <person name="Sakamoto N."/>
            <person name="Oishi K."/>
            <person name="Kohara Y."/>
            <person name="Kobayashi M."/>
            <person name="Toyoda A."/>
            <person name="Sakaki Y."/>
            <person name="Sakurai T."/>
            <person name="Iida K."/>
            <person name="Akiyama K."/>
            <person name="Satou M."/>
            <person name="Toyoda T."/>
            <person name="Konagaya A."/>
            <person name="Carninci P."/>
            <person name="Kawai J."/>
            <person name="Hayashizaki Y."/>
            <person name="Shinozaki K."/>
        </authorList>
    </citation>
    <scope>NUCLEOTIDE SEQUENCE [LARGE SCALE MRNA] OF 1-527</scope>
    <source>
        <strain>cv. Columbia</strain>
    </source>
</reference>
<reference key="4">
    <citation type="journal article" date="2000" name="Plant Mol. Biol.">
        <title>In Arabidopsis thaliana, 1% of the genome codes for a novel protein family unique to plants.</title>
        <authorList>
            <person name="Aubourg S."/>
            <person name="Boudet N."/>
            <person name="Kreis M."/>
            <person name="Lecharny A."/>
        </authorList>
    </citation>
    <scope>GENE FAMILY</scope>
</reference>
<reference key="5">
    <citation type="journal article" date="2004" name="Plant Cell">
        <title>Genome-wide analysis of Arabidopsis pentatricopeptide repeat proteins reveals their essential role in organelle biogenesis.</title>
        <authorList>
            <person name="Lurin C."/>
            <person name="Andres C."/>
            <person name="Aubourg S."/>
            <person name="Bellaoui M."/>
            <person name="Bitton F."/>
            <person name="Bruyere C."/>
            <person name="Caboche M."/>
            <person name="Debast C."/>
            <person name="Gualberto J."/>
            <person name="Hoffmann B."/>
            <person name="Lecharny A."/>
            <person name="Le Ret M."/>
            <person name="Martin-Magniette M.-L."/>
            <person name="Mireau H."/>
            <person name="Peeters N."/>
            <person name="Renou J.-P."/>
            <person name="Szurek B."/>
            <person name="Taconnat L."/>
            <person name="Small I."/>
        </authorList>
    </citation>
    <scope>GENE FAMILY</scope>
</reference>
<evidence type="ECO:0000305" key="1"/>
<protein>
    <recommendedName>
        <fullName>Pentatricopeptide repeat-containing protein At1g31920</fullName>
    </recommendedName>
</protein>
<keyword id="KW-1185">Reference proteome</keyword>
<keyword id="KW-0677">Repeat</keyword>
<comment type="similarity">
    <text evidence="1">Belongs to the PPR family. PCMP-H subfamily.</text>
</comment>
<comment type="online information" name="Pentatricopeptide repeat proteins">
    <link uri="https://ppr.plantenergy.uwa.edu.au"/>
</comment>
<dbReference type="EMBL" id="AC079041">
    <property type="protein sequence ID" value="AAG50713.1"/>
    <property type="molecule type" value="Genomic_DNA"/>
</dbReference>
<dbReference type="EMBL" id="CP002684">
    <property type="protein sequence ID" value="AEE31416.1"/>
    <property type="molecule type" value="Genomic_DNA"/>
</dbReference>
<dbReference type="EMBL" id="AK226634">
    <property type="protein sequence ID" value="BAE98745.1"/>
    <property type="molecule type" value="mRNA"/>
</dbReference>
<dbReference type="PIR" id="D86443">
    <property type="entry name" value="D86443"/>
</dbReference>
<dbReference type="RefSeq" id="NP_174474.1">
    <property type="nucleotide sequence ID" value="NM_102928.5"/>
</dbReference>
<dbReference type="SMR" id="Q9C6T2"/>
<dbReference type="FunCoup" id="Q9C6T2">
    <property type="interactions" value="326"/>
</dbReference>
<dbReference type="STRING" id="3702.Q9C6T2"/>
<dbReference type="iPTMnet" id="Q9C6T2"/>
<dbReference type="PaxDb" id="3702-AT1G31920.1"/>
<dbReference type="ProteomicsDB" id="236653"/>
<dbReference type="EnsemblPlants" id="AT1G31920.1">
    <property type="protein sequence ID" value="AT1G31920.1"/>
    <property type="gene ID" value="AT1G31920"/>
</dbReference>
<dbReference type="GeneID" id="840082"/>
<dbReference type="Gramene" id="AT1G31920.1">
    <property type="protein sequence ID" value="AT1G31920.1"/>
    <property type="gene ID" value="AT1G31920"/>
</dbReference>
<dbReference type="KEGG" id="ath:AT1G31920"/>
<dbReference type="Araport" id="AT1G31920"/>
<dbReference type="TAIR" id="AT1G31920"/>
<dbReference type="eggNOG" id="KOG4197">
    <property type="taxonomic scope" value="Eukaryota"/>
</dbReference>
<dbReference type="HOGENOM" id="CLU_002706_37_2_1"/>
<dbReference type="InParanoid" id="Q9C6T2"/>
<dbReference type="OMA" id="IHCALLR"/>
<dbReference type="PhylomeDB" id="Q9C6T2"/>
<dbReference type="PRO" id="PR:Q9C6T2"/>
<dbReference type="Proteomes" id="UP000006548">
    <property type="component" value="Chromosome 1"/>
</dbReference>
<dbReference type="ExpressionAtlas" id="Q9C6T2">
    <property type="expression patterns" value="baseline and differential"/>
</dbReference>
<dbReference type="GO" id="GO:0003729">
    <property type="term" value="F:mRNA binding"/>
    <property type="evidence" value="ECO:0000314"/>
    <property type="project" value="TAIR"/>
</dbReference>
<dbReference type="GO" id="GO:0008270">
    <property type="term" value="F:zinc ion binding"/>
    <property type="evidence" value="ECO:0007669"/>
    <property type="project" value="InterPro"/>
</dbReference>
<dbReference type="GO" id="GO:0009451">
    <property type="term" value="P:RNA modification"/>
    <property type="evidence" value="ECO:0007669"/>
    <property type="project" value="InterPro"/>
</dbReference>
<dbReference type="FunFam" id="1.25.40.10:FF:001370">
    <property type="entry name" value="Pentatricopeptide repeat-containing protein"/>
    <property type="match status" value="1"/>
</dbReference>
<dbReference type="FunFam" id="1.25.40.10:FF:001766">
    <property type="entry name" value="Pentatricopeptide repeat-containing protein"/>
    <property type="match status" value="1"/>
</dbReference>
<dbReference type="Gene3D" id="1.25.40.10">
    <property type="entry name" value="Tetratricopeptide repeat domain"/>
    <property type="match status" value="2"/>
</dbReference>
<dbReference type="InterPro" id="IPR032867">
    <property type="entry name" value="DYW_dom"/>
</dbReference>
<dbReference type="InterPro" id="IPR046848">
    <property type="entry name" value="E_motif"/>
</dbReference>
<dbReference type="InterPro" id="IPR046849">
    <property type="entry name" value="Eplus_motif"/>
</dbReference>
<dbReference type="InterPro" id="IPR002885">
    <property type="entry name" value="Pentatricopeptide_rpt"/>
</dbReference>
<dbReference type="InterPro" id="IPR046960">
    <property type="entry name" value="PPR_At4g14850-like_plant"/>
</dbReference>
<dbReference type="InterPro" id="IPR011990">
    <property type="entry name" value="TPR-like_helical_dom_sf"/>
</dbReference>
<dbReference type="NCBIfam" id="TIGR00756">
    <property type="entry name" value="PPR"/>
    <property type="match status" value="4"/>
</dbReference>
<dbReference type="PANTHER" id="PTHR47926:SF400">
    <property type="entry name" value="PENTACOTRIPEPTIDE-REPEAT REGION OF PRORP DOMAIN-CONTAINING PROTEIN"/>
    <property type="match status" value="1"/>
</dbReference>
<dbReference type="PANTHER" id="PTHR47926">
    <property type="entry name" value="PENTATRICOPEPTIDE REPEAT-CONTAINING PROTEIN"/>
    <property type="match status" value="1"/>
</dbReference>
<dbReference type="Pfam" id="PF14432">
    <property type="entry name" value="DYW_deaminase"/>
    <property type="match status" value="1"/>
</dbReference>
<dbReference type="Pfam" id="PF20431">
    <property type="entry name" value="E_motif"/>
    <property type="match status" value="1"/>
</dbReference>
<dbReference type="Pfam" id="PF20430">
    <property type="entry name" value="Eplus_motif"/>
    <property type="match status" value="1"/>
</dbReference>
<dbReference type="Pfam" id="PF01535">
    <property type="entry name" value="PPR"/>
    <property type="match status" value="2"/>
</dbReference>
<dbReference type="Pfam" id="PF13041">
    <property type="entry name" value="PPR_2"/>
    <property type="match status" value="2"/>
</dbReference>
<dbReference type="PROSITE" id="PS51375">
    <property type="entry name" value="PPR"/>
    <property type="match status" value="8"/>
</dbReference>
<accession>Q9C6T2</accession>
<accession>Q0WVV3</accession>
<gene>
    <name type="primary">PCMP-H11</name>
    <name type="ordered locus">At1g31920</name>
    <name type="ORF">F5M6.8</name>
</gene>
<feature type="chain" id="PRO_0000342809" description="Pentatricopeptide repeat-containing protein At1g31920">
    <location>
        <begin position="1"/>
        <end position="606"/>
    </location>
</feature>
<feature type="repeat" description="PPR 1">
    <location>
        <begin position="96"/>
        <end position="130"/>
    </location>
</feature>
<feature type="repeat" description="PPR 2">
    <location>
        <begin position="131"/>
        <end position="165"/>
    </location>
</feature>
<feature type="repeat" description="PPR 3">
    <location>
        <begin position="166"/>
        <end position="200"/>
    </location>
</feature>
<feature type="repeat" description="PPR 4">
    <location>
        <begin position="201"/>
        <end position="227"/>
    </location>
</feature>
<feature type="repeat" description="PPR 5">
    <location>
        <begin position="233"/>
        <end position="263"/>
    </location>
</feature>
<feature type="repeat" description="PPR 6">
    <location>
        <begin position="268"/>
        <end position="298"/>
    </location>
</feature>
<feature type="repeat" description="PPR 7">
    <location>
        <begin position="299"/>
        <end position="333"/>
    </location>
</feature>
<feature type="repeat" description="PPR 8">
    <location>
        <begin position="334"/>
        <end position="368"/>
    </location>
</feature>
<feature type="repeat" description="PPR 9">
    <location>
        <begin position="370"/>
        <end position="404"/>
    </location>
</feature>
<feature type="region of interest" description="Type E motif">
    <location>
        <begin position="405"/>
        <end position="480"/>
    </location>
</feature>
<feature type="region of interest" description="Type E(+) motif">
    <location>
        <begin position="481"/>
        <end position="511"/>
    </location>
</feature>
<feature type="region of interest" description="Type DYW motif">
    <location>
        <begin position="512"/>
        <end position="606"/>
    </location>
</feature>